<protein>
    <recommendedName>
        <fullName evidence="1">GTPase Era</fullName>
    </recommendedName>
</protein>
<name>ERA_BORDL</name>
<gene>
    <name evidence="1" type="primary">era</name>
    <name type="ordered locus">BDU_663</name>
</gene>
<sequence length="290" mass="33290">MKSGFVSIIGRPSTGKSTLLNSICGHQISITSSTPQTTRNKIKGIFTDKRGQIIFIDTPGFHLSKKNFNIALMNNVYSAIIETELIIYVIDIQDQPGTEENEILTIIQRSKINFIVVINKIDIHKTKEKEIMTFLEEKKIQKNKIIKISAEKQINIETMKDKIYENLNEGPLYYPKEYYTDQKINLRISEIIRGVTIKKLKEELPYSIYTEIEILEDRENKFFIKANIIVAGESQKGIIVGKGGKGIKSIGEESRKIISKILEKKCNLFLQVKLRKNWNKNAKLIKNLIN</sequence>
<feature type="chain" id="PRO_1000121302" description="GTPase Era">
    <location>
        <begin position="1"/>
        <end position="290"/>
    </location>
</feature>
<feature type="domain" description="Era-type G" evidence="2">
    <location>
        <begin position="2"/>
        <end position="169"/>
    </location>
</feature>
<feature type="domain" description="KH type-2" evidence="1">
    <location>
        <begin position="200"/>
        <end position="276"/>
    </location>
</feature>
<feature type="region of interest" description="G1" evidence="2">
    <location>
        <begin position="10"/>
        <end position="17"/>
    </location>
</feature>
<feature type="region of interest" description="G2" evidence="2">
    <location>
        <begin position="36"/>
        <end position="40"/>
    </location>
</feature>
<feature type="region of interest" description="G3" evidence="2">
    <location>
        <begin position="57"/>
        <end position="60"/>
    </location>
</feature>
<feature type="region of interest" description="G4" evidence="2">
    <location>
        <begin position="119"/>
        <end position="122"/>
    </location>
</feature>
<feature type="region of interest" description="G5" evidence="2">
    <location>
        <begin position="148"/>
        <end position="150"/>
    </location>
</feature>
<feature type="binding site" evidence="1">
    <location>
        <begin position="10"/>
        <end position="17"/>
    </location>
    <ligand>
        <name>GTP</name>
        <dbReference type="ChEBI" id="CHEBI:37565"/>
    </ligand>
</feature>
<feature type="binding site" evidence="1">
    <location>
        <begin position="57"/>
        <end position="61"/>
    </location>
    <ligand>
        <name>GTP</name>
        <dbReference type="ChEBI" id="CHEBI:37565"/>
    </ligand>
</feature>
<feature type="binding site" evidence="1">
    <location>
        <begin position="119"/>
        <end position="122"/>
    </location>
    <ligand>
        <name>GTP</name>
        <dbReference type="ChEBI" id="CHEBI:37565"/>
    </ligand>
</feature>
<accession>B5RMK6</accession>
<organism>
    <name type="scientific">Borrelia duttonii (strain Ly)</name>
    <dbReference type="NCBI Taxonomy" id="412419"/>
    <lineage>
        <taxon>Bacteria</taxon>
        <taxon>Pseudomonadati</taxon>
        <taxon>Spirochaetota</taxon>
        <taxon>Spirochaetia</taxon>
        <taxon>Spirochaetales</taxon>
        <taxon>Borreliaceae</taxon>
        <taxon>Borrelia</taxon>
    </lineage>
</organism>
<reference key="1">
    <citation type="journal article" date="2008" name="PLoS Genet.">
        <title>The genome of Borrelia recurrentis, the agent of deadly louse-borne relapsing fever, is a degraded subset of tick-borne Borrelia duttonii.</title>
        <authorList>
            <person name="Lescot M."/>
            <person name="Audic S."/>
            <person name="Robert C."/>
            <person name="Nguyen T.T."/>
            <person name="Blanc G."/>
            <person name="Cutler S.J."/>
            <person name="Wincker P."/>
            <person name="Couloux A."/>
            <person name="Claverie J.-M."/>
            <person name="Raoult D."/>
            <person name="Drancourt M."/>
        </authorList>
    </citation>
    <scope>NUCLEOTIDE SEQUENCE [LARGE SCALE GENOMIC DNA]</scope>
    <source>
        <strain>Ly</strain>
    </source>
</reference>
<comment type="function">
    <text evidence="1">An essential GTPase that binds both GDP and GTP, with rapid nucleotide exchange. Plays a role in 16S rRNA processing and 30S ribosomal subunit biogenesis and possibly also in cell cycle regulation and energy metabolism.</text>
</comment>
<comment type="subunit">
    <text evidence="1">Monomer.</text>
</comment>
<comment type="subcellular location">
    <subcellularLocation>
        <location>Cytoplasm</location>
    </subcellularLocation>
    <subcellularLocation>
        <location evidence="1">Cell inner membrane</location>
        <topology evidence="1">Peripheral membrane protein</topology>
    </subcellularLocation>
</comment>
<comment type="similarity">
    <text evidence="1 2">Belongs to the TRAFAC class TrmE-Era-EngA-EngB-Septin-like GTPase superfamily. Era GTPase family.</text>
</comment>
<keyword id="KW-0997">Cell inner membrane</keyword>
<keyword id="KW-1003">Cell membrane</keyword>
<keyword id="KW-0963">Cytoplasm</keyword>
<keyword id="KW-0342">GTP-binding</keyword>
<keyword id="KW-0472">Membrane</keyword>
<keyword id="KW-0547">Nucleotide-binding</keyword>
<keyword id="KW-0690">Ribosome biogenesis</keyword>
<keyword id="KW-0694">RNA-binding</keyword>
<keyword id="KW-0699">rRNA-binding</keyword>
<proteinExistence type="inferred from homology"/>
<dbReference type="EMBL" id="CP000976">
    <property type="protein sequence ID" value="ACH93592.1"/>
    <property type="molecule type" value="Genomic_DNA"/>
</dbReference>
<dbReference type="RefSeq" id="WP_012538401.1">
    <property type="nucleotide sequence ID" value="NC_011229.1"/>
</dbReference>
<dbReference type="SMR" id="B5RMK6"/>
<dbReference type="STRING" id="412419.BDU_663"/>
<dbReference type="KEGG" id="bdu:BDU_663"/>
<dbReference type="eggNOG" id="COG1159">
    <property type="taxonomic scope" value="Bacteria"/>
</dbReference>
<dbReference type="HOGENOM" id="CLU_038009_1_0_12"/>
<dbReference type="OrthoDB" id="9805918at2"/>
<dbReference type="Proteomes" id="UP000000611">
    <property type="component" value="Chromosome"/>
</dbReference>
<dbReference type="GO" id="GO:0005829">
    <property type="term" value="C:cytosol"/>
    <property type="evidence" value="ECO:0007669"/>
    <property type="project" value="TreeGrafter"/>
</dbReference>
<dbReference type="GO" id="GO:0005886">
    <property type="term" value="C:plasma membrane"/>
    <property type="evidence" value="ECO:0007669"/>
    <property type="project" value="UniProtKB-SubCell"/>
</dbReference>
<dbReference type="GO" id="GO:0016887">
    <property type="term" value="F:ATP hydrolysis activity"/>
    <property type="evidence" value="ECO:0007669"/>
    <property type="project" value="InterPro"/>
</dbReference>
<dbReference type="GO" id="GO:0005525">
    <property type="term" value="F:GTP binding"/>
    <property type="evidence" value="ECO:0007669"/>
    <property type="project" value="UniProtKB-UniRule"/>
</dbReference>
<dbReference type="GO" id="GO:0003924">
    <property type="term" value="F:GTPase activity"/>
    <property type="evidence" value="ECO:0007669"/>
    <property type="project" value="UniProtKB-UniRule"/>
</dbReference>
<dbReference type="GO" id="GO:0043024">
    <property type="term" value="F:ribosomal small subunit binding"/>
    <property type="evidence" value="ECO:0007669"/>
    <property type="project" value="TreeGrafter"/>
</dbReference>
<dbReference type="GO" id="GO:0070181">
    <property type="term" value="F:small ribosomal subunit rRNA binding"/>
    <property type="evidence" value="ECO:0007669"/>
    <property type="project" value="UniProtKB-UniRule"/>
</dbReference>
<dbReference type="GO" id="GO:0000028">
    <property type="term" value="P:ribosomal small subunit assembly"/>
    <property type="evidence" value="ECO:0007669"/>
    <property type="project" value="TreeGrafter"/>
</dbReference>
<dbReference type="CDD" id="cd04163">
    <property type="entry name" value="Era"/>
    <property type="match status" value="1"/>
</dbReference>
<dbReference type="Gene3D" id="3.30.300.20">
    <property type="match status" value="1"/>
</dbReference>
<dbReference type="Gene3D" id="3.40.50.300">
    <property type="entry name" value="P-loop containing nucleotide triphosphate hydrolases"/>
    <property type="match status" value="1"/>
</dbReference>
<dbReference type="HAMAP" id="MF_00367">
    <property type="entry name" value="GTPase_Era"/>
    <property type="match status" value="1"/>
</dbReference>
<dbReference type="InterPro" id="IPR003593">
    <property type="entry name" value="AAA+_ATPase"/>
</dbReference>
<dbReference type="InterPro" id="IPR030388">
    <property type="entry name" value="G_ERA_dom"/>
</dbReference>
<dbReference type="InterPro" id="IPR006073">
    <property type="entry name" value="GTP-bd"/>
</dbReference>
<dbReference type="InterPro" id="IPR005662">
    <property type="entry name" value="GTPase_Era-like"/>
</dbReference>
<dbReference type="InterPro" id="IPR015946">
    <property type="entry name" value="KH_dom-like_a/b"/>
</dbReference>
<dbReference type="InterPro" id="IPR004044">
    <property type="entry name" value="KH_dom_type_2"/>
</dbReference>
<dbReference type="InterPro" id="IPR009019">
    <property type="entry name" value="KH_sf_prok-type"/>
</dbReference>
<dbReference type="InterPro" id="IPR027417">
    <property type="entry name" value="P-loop_NTPase"/>
</dbReference>
<dbReference type="InterPro" id="IPR005225">
    <property type="entry name" value="Small_GTP-bd"/>
</dbReference>
<dbReference type="NCBIfam" id="TIGR00436">
    <property type="entry name" value="era"/>
    <property type="match status" value="1"/>
</dbReference>
<dbReference type="NCBIfam" id="NF000908">
    <property type="entry name" value="PRK00089.1"/>
    <property type="match status" value="1"/>
</dbReference>
<dbReference type="NCBIfam" id="TIGR00231">
    <property type="entry name" value="small_GTP"/>
    <property type="match status" value="1"/>
</dbReference>
<dbReference type="PANTHER" id="PTHR42698">
    <property type="entry name" value="GTPASE ERA"/>
    <property type="match status" value="1"/>
</dbReference>
<dbReference type="PANTHER" id="PTHR42698:SF1">
    <property type="entry name" value="GTPASE ERA, MITOCHONDRIAL"/>
    <property type="match status" value="1"/>
</dbReference>
<dbReference type="Pfam" id="PF07650">
    <property type="entry name" value="KH_2"/>
    <property type="match status" value="1"/>
</dbReference>
<dbReference type="Pfam" id="PF01926">
    <property type="entry name" value="MMR_HSR1"/>
    <property type="match status" value="1"/>
</dbReference>
<dbReference type="PRINTS" id="PR00326">
    <property type="entry name" value="GTP1OBG"/>
</dbReference>
<dbReference type="SMART" id="SM00382">
    <property type="entry name" value="AAA"/>
    <property type="match status" value="1"/>
</dbReference>
<dbReference type="SUPFAM" id="SSF52540">
    <property type="entry name" value="P-loop containing nucleoside triphosphate hydrolases"/>
    <property type="match status" value="1"/>
</dbReference>
<dbReference type="SUPFAM" id="SSF54814">
    <property type="entry name" value="Prokaryotic type KH domain (KH-domain type II)"/>
    <property type="match status" value="1"/>
</dbReference>
<dbReference type="PROSITE" id="PS51713">
    <property type="entry name" value="G_ERA"/>
    <property type="match status" value="1"/>
</dbReference>
<dbReference type="PROSITE" id="PS50823">
    <property type="entry name" value="KH_TYPE_2"/>
    <property type="match status" value="1"/>
</dbReference>
<evidence type="ECO:0000255" key="1">
    <source>
        <dbReference type="HAMAP-Rule" id="MF_00367"/>
    </source>
</evidence>
<evidence type="ECO:0000255" key="2">
    <source>
        <dbReference type="PROSITE-ProRule" id="PRU01050"/>
    </source>
</evidence>